<evidence type="ECO:0000269" key="1">
    <source>
    </source>
</evidence>
<evidence type="ECO:0000303" key="2">
    <source>
    </source>
</evidence>
<evidence type="ECO:0000305" key="3"/>
<evidence type="ECO:0000305" key="4">
    <source>
    </source>
</evidence>
<feature type="chain" id="PRO_0000458402" description="Phomopsin biosynthesis cluster protein D">
    <location>
        <begin position="1"/>
        <end position="189"/>
    </location>
</feature>
<name>PHOC1_DIALO</name>
<sequence>MAKSQNKESPELRTPNRFITDHDASGLSVFNTSIPDALPAQVIGGRDRFHLAYATTTSPVDLTNQSDIVTYSSFLSTPPGIFLPGGSVLRIVDVRPGGESLMHRTESIDYGVVLDGEIDLVLDSGESRILKRGDVAVQRGTNHLWRNRSHTAWGRMVFVTLEAKPIEIDGKLLGGVTGLGMDDTSPAGN</sequence>
<dbReference type="EMBL" id="LC646903">
    <property type="protein sequence ID" value="BDA39134.1"/>
    <property type="molecule type" value="Genomic_DNA"/>
</dbReference>
<dbReference type="SMR" id="A0A8J9R8G6"/>
<dbReference type="CDD" id="cd02231">
    <property type="entry name" value="cupin_BLL6423-like"/>
    <property type="match status" value="1"/>
</dbReference>
<dbReference type="Gene3D" id="2.60.120.10">
    <property type="entry name" value="Jelly Rolls"/>
    <property type="match status" value="1"/>
</dbReference>
<dbReference type="InterPro" id="IPR013096">
    <property type="entry name" value="Cupin_2"/>
</dbReference>
<dbReference type="InterPro" id="IPR047142">
    <property type="entry name" value="OryJ/VirC-like"/>
</dbReference>
<dbReference type="InterPro" id="IPR014710">
    <property type="entry name" value="RmlC-like_jellyroll"/>
</dbReference>
<dbReference type="InterPro" id="IPR011051">
    <property type="entry name" value="RmlC_Cupin_sf"/>
</dbReference>
<dbReference type="PANTHER" id="PTHR36156:SF2">
    <property type="entry name" value="CUPIN TYPE-2 DOMAIN-CONTAINING PROTEIN"/>
    <property type="match status" value="1"/>
</dbReference>
<dbReference type="PANTHER" id="PTHR36156">
    <property type="entry name" value="SLR2101 PROTEIN"/>
    <property type="match status" value="1"/>
</dbReference>
<dbReference type="Pfam" id="PF07883">
    <property type="entry name" value="Cupin_2"/>
    <property type="match status" value="1"/>
</dbReference>
<dbReference type="SUPFAM" id="SSF51182">
    <property type="entry name" value="RmlC-like cupins"/>
    <property type="match status" value="1"/>
</dbReference>
<keyword id="KW-0843">Virulence</keyword>
<protein>
    <recommendedName>
        <fullName evidence="2">Phomopsin biosynthesis cluster protein D</fullName>
    </recommendedName>
</protein>
<proteinExistence type="inferred from homology"/>
<reference key="1">
    <citation type="journal article" date="2021" name="Angew. Chem. Int. Ed.">
        <title>Biosynthetic studies of phomopsins unveil posttranslational installation of dehydroamino acids by ustYa family proteins.</title>
        <authorList>
            <person name="Sogahata K."/>
            <person name="Ozaki T."/>
            <person name="Igarashi Y."/>
            <person name="Naganuma Y."/>
            <person name="Liu C."/>
            <person name="Minami A."/>
            <person name="Oikawa H."/>
        </authorList>
    </citation>
    <scope>NUCLEOTIDE SEQUENCE [GENOMIC DNA]</scope>
    <scope>FUNCTION</scope>
    <source>
        <strain>ATCC 26115 / IMI 115107 / C 1557</strain>
    </source>
</reference>
<accession>A0A8J9R8G6</accession>
<gene>
    <name evidence="2" type="primary">phomC</name>
</gene>
<organism>
    <name type="scientific">Diaporthe leptostromiformis</name>
    <name type="common">Lupinosis disease fungus</name>
    <name type="synonym">Phomopsis leptostromiformis</name>
    <dbReference type="NCBI Taxonomy" id="291059"/>
    <lineage>
        <taxon>Eukaryota</taxon>
        <taxon>Fungi</taxon>
        <taxon>Dikarya</taxon>
        <taxon>Ascomycota</taxon>
        <taxon>Pezizomycotina</taxon>
        <taxon>Sordariomycetes</taxon>
        <taxon>Sordariomycetidae</taxon>
        <taxon>Diaporthales</taxon>
        <taxon>Diaporthaceae</taxon>
        <taxon>Diaporthe</taxon>
    </lineage>
</organism>
<comment type="function">
    <text evidence="1 4">Part of the gene cluster that mediates the biosynthesis of the phomopsins, a group of hexapeptide mycotoxins which infects lupins and causes lupinosis disease in livestock (PubMed:34608734). The role of phomC within the phomopsins biosynthesis pathway has still to be determined (Probable). The pathway starts with the processing of the precursor phomA by several endopeptidases including kexin proteases as well as the cluster-specific S41 family peptidase phomP1 and the oligopeptidase phomG to produce 10 identical copies of the hexapeptide Tyr-Val-Ile-Pro-Ile-Asp. After being excised from the precursor peptide, the core peptides are cyclized and modified post-translationally by enzymes encoded within the gene cluster. The timing and order of proteolysis of the phomA precursor and PTMs are still unknown. Two tyrosinase-like enzymes, phomQ1 and phomQ2, catalyze the chlorination and hydroxylation of Tyr, respectively. PhomYb, is proposed to be involved in the construction of the macrocyclic structure. The other 4 ustYa family proteins may be involved in PTMs that generate the unique structure of phomopsin A. PhomYa is required for the hydroxylation of C-beta of Tyr. PhomYc, phomYd, and phomYe are responsible for the biosynthesis of 2,3-dehydroisoleucine (dIle), 2,3-dehydroaspartic acid (dAsp), and 3,4-dehydroproline (dPro), respectively. While dIle formation by phomYc is indispensable for the installation of dAsp by phomYd, the order of the other PTMs have not been elucidated yet. Most of the biosynthetic enzymes likely have broad substrate specificity, and thus, there might be a metabolic grid from a precursor to phomopsin A. The enzyme(s) responsible for the biosynthesis of 3,4-dehydrovaline (dVal) have also not been identified yet. Finally, phomM acts as an S-adenosylmethionine-dependent alpha-N-methyltransferase that catalyzes two successive N-methylation reactions, converting N-desmethyl-phomopsin A to phomopsin A and phomopsin A further to an N,N-dimethylated congener called phomopsin E (Probable).</text>
</comment>
<comment type="similarity">
    <text evidence="3">Belongs to the oryJ family.</text>
</comment>